<dbReference type="EMBL" id="L07080">
    <property type="protein sequence ID" value="AAA34672.1"/>
    <property type="molecule type" value="Genomic_DNA"/>
</dbReference>
<dbReference type="EMBL" id="U51032">
    <property type="protein sequence ID" value="AAB64781.1"/>
    <property type="molecule type" value="Genomic_DNA"/>
</dbReference>
<dbReference type="EMBL" id="BK006938">
    <property type="protein sequence ID" value="DAA12185.1"/>
    <property type="molecule type" value="Genomic_DNA"/>
</dbReference>
<dbReference type="PIR" id="S31294">
    <property type="entry name" value="S31294"/>
</dbReference>
<dbReference type="RefSeq" id="NP_010632.1">
    <property type="nucleotide sequence ID" value="NM_001180653.1"/>
</dbReference>
<dbReference type="SMR" id="P32466"/>
<dbReference type="BioGRID" id="32401">
    <property type="interactions" value="96"/>
</dbReference>
<dbReference type="DIP" id="DIP-4178N"/>
<dbReference type="FunCoup" id="P32466">
    <property type="interactions" value="1433"/>
</dbReference>
<dbReference type="IntAct" id="P32466">
    <property type="interactions" value="6"/>
</dbReference>
<dbReference type="MINT" id="P32466"/>
<dbReference type="STRING" id="4932.YDR345C"/>
<dbReference type="GlyCosmos" id="P32466">
    <property type="glycosylation" value="2 sites, No reported glycans"/>
</dbReference>
<dbReference type="GlyGen" id="P32466">
    <property type="glycosylation" value="3 sites"/>
</dbReference>
<dbReference type="iPTMnet" id="P32466"/>
<dbReference type="PaxDb" id="4932-YDR345C"/>
<dbReference type="PeptideAtlas" id="P32466"/>
<dbReference type="EnsemblFungi" id="YDR345C_mRNA">
    <property type="protein sequence ID" value="YDR345C"/>
    <property type="gene ID" value="YDR345C"/>
</dbReference>
<dbReference type="GeneID" id="851946"/>
<dbReference type="KEGG" id="sce:YDR345C"/>
<dbReference type="AGR" id="SGD:S000002753"/>
<dbReference type="SGD" id="S000002753">
    <property type="gene designation" value="HXT3"/>
</dbReference>
<dbReference type="VEuPathDB" id="FungiDB:YDR345C"/>
<dbReference type="eggNOG" id="KOG0254">
    <property type="taxonomic scope" value="Eukaryota"/>
</dbReference>
<dbReference type="GeneTree" id="ENSGT00940000176280"/>
<dbReference type="HOGENOM" id="CLU_001265_30_1_1"/>
<dbReference type="InParanoid" id="P32466"/>
<dbReference type="OMA" id="AMFKRTM"/>
<dbReference type="OrthoDB" id="5141738at2759"/>
<dbReference type="BioCyc" id="YEAST:G3O-29899-MONOMER"/>
<dbReference type="BioGRID-ORCS" id="851946">
    <property type="hits" value="0 hits in 10 CRISPR screens"/>
</dbReference>
<dbReference type="PRO" id="PR:P32466"/>
<dbReference type="Proteomes" id="UP000002311">
    <property type="component" value="Chromosome IV"/>
</dbReference>
<dbReference type="RNAct" id="P32466">
    <property type="molecule type" value="protein"/>
</dbReference>
<dbReference type="GO" id="GO:0071944">
    <property type="term" value="C:cell periphery"/>
    <property type="evidence" value="ECO:0007005"/>
    <property type="project" value="SGD"/>
</dbReference>
<dbReference type="GO" id="GO:0005886">
    <property type="term" value="C:plasma membrane"/>
    <property type="evidence" value="ECO:0000314"/>
    <property type="project" value="SGD"/>
</dbReference>
<dbReference type="GO" id="GO:0005351">
    <property type="term" value="F:carbohydrate:proton symporter activity"/>
    <property type="evidence" value="ECO:0000318"/>
    <property type="project" value="GO_Central"/>
</dbReference>
<dbReference type="GO" id="GO:0055056">
    <property type="term" value="F:D-glucose transmembrane transporter activity"/>
    <property type="evidence" value="ECO:0000314"/>
    <property type="project" value="SGD"/>
</dbReference>
<dbReference type="GO" id="GO:0005353">
    <property type="term" value="F:fructose transmembrane transporter activity"/>
    <property type="evidence" value="ECO:0000304"/>
    <property type="project" value="SGD"/>
</dbReference>
<dbReference type="GO" id="GO:0015578">
    <property type="term" value="F:mannose transmembrane transporter activity"/>
    <property type="evidence" value="ECO:0000304"/>
    <property type="project" value="SGD"/>
</dbReference>
<dbReference type="GO" id="GO:0008643">
    <property type="term" value="P:carbohydrate transport"/>
    <property type="evidence" value="ECO:0000318"/>
    <property type="project" value="GO_Central"/>
</dbReference>
<dbReference type="GO" id="GO:1904659">
    <property type="term" value="P:D-glucose transmembrane transport"/>
    <property type="evidence" value="ECO:0000314"/>
    <property type="project" value="SGD"/>
</dbReference>
<dbReference type="GO" id="GO:0008645">
    <property type="term" value="P:hexose transmembrane transport"/>
    <property type="evidence" value="ECO:0000304"/>
    <property type="project" value="SGD"/>
</dbReference>
<dbReference type="GO" id="GO:0055085">
    <property type="term" value="P:transmembrane transport"/>
    <property type="evidence" value="ECO:0000304"/>
    <property type="project" value="SGD"/>
</dbReference>
<dbReference type="CDD" id="cd17356">
    <property type="entry name" value="MFS_HXT"/>
    <property type="match status" value="1"/>
</dbReference>
<dbReference type="FunFam" id="1.20.1250.20:FF:000044">
    <property type="entry name" value="Hexose transporter Hxt3p"/>
    <property type="match status" value="1"/>
</dbReference>
<dbReference type="Gene3D" id="1.20.1250.20">
    <property type="entry name" value="MFS general substrate transporter like domains"/>
    <property type="match status" value="1"/>
</dbReference>
<dbReference type="InterPro" id="IPR020846">
    <property type="entry name" value="MFS_dom"/>
</dbReference>
<dbReference type="InterPro" id="IPR005828">
    <property type="entry name" value="MFS_sugar_transport-like"/>
</dbReference>
<dbReference type="InterPro" id="IPR050360">
    <property type="entry name" value="MFS_Sugar_Transporters"/>
</dbReference>
<dbReference type="InterPro" id="IPR036259">
    <property type="entry name" value="MFS_trans_sf"/>
</dbReference>
<dbReference type="InterPro" id="IPR003663">
    <property type="entry name" value="Sugar/inositol_transpt"/>
</dbReference>
<dbReference type="InterPro" id="IPR005829">
    <property type="entry name" value="Sugar_transporter_CS"/>
</dbReference>
<dbReference type="NCBIfam" id="TIGR00879">
    <property type="entry name" value="SP"/>
    <property type="match status" value="1"/>
</dbReference>
<dbReference type="PANTHER" id="PTHR48022:SF75">
    <property type="entry name" value="GALACTOSE TRANSPORTER-RELATED"/>
    <property type="match status" value="1"/>
</dbReference>
<dbReference type="PANTHER" id="PTHR48022">
    <property type="entry name" value="PLASTIDIC GLUCOSE TRANSPORTER 4"/>
    <property type="match status" value="1"/>
</dbReference>
<dbReference type="Pfam" id="PF00083">
    <property type="entry name" value="Sugar_tr"/>
    <property type="match status" value="1"/>
</dbReference>
<dbReference type="PRINTS" id="PR00171">
    <property type="entry name" value="SUGRTRNSPORT"/>
</dbReference>
<dbReference type="SUPFAM" id="SSF103473">
    <property type="entry name" value="MFS general substrate transporter"/>
    <property type="match status" value="1"/>
</dbReference>
<dbReference type="PROSITE" id="PS50850">
    <property type="entry name" value="MFS"/>
    <property type="match status" value="1"/>
</dbReference>
<dbReference type="PROSITE" id="PS00216">
    <property type="entry name" value="SUGAR_TRANSPORT_1"/>
    <property type="match status" value="1"/>
</dbReference>
<dbReference type="PROSITE" id="PS00217">
    <property type="entry name" value="SUGAR_TRANSPORT_2"/>
    <property type="match status" value="1"/>
</dbReference>
<proteinExistence type="evidence at protein level"/>
<keyword id="KW-0325">Glycoprotein</keyword>
<keyword id="KW-0472">Membrane</keyword>
<keyword id="KW-0597">Phosphoprotein</keyword>
<keyword id="KW-1185">Reference proteome</keyword>
<keyword id="KW-0677">Repeat</keyword>
<keyword id="KW-0762">Sugar transport</keyword>
<keyword id="KW-0812">Transmembrane</keyword>
<keyword id="KW-1133">Transmembrane helix</keyword>
<keyword id="KW-0813">Transport</keyword>
<name>HXT3_YEAST</name>
<comment type="function">
    <text>Low-affinity glucose transporter.</text>
</comment>
<comment type="subcellular location">
    <subcellularLocation>
        <location>Membrane</location>
        <topology>Multi-pass membrane protein</topology>
    </subcellularLocation>
</comment>
<comment type="induction">
    <text>Repressed at high glucose concentrations.</text>
</comment>
<comment type="miscellaneous">
    <text>Glucose transport is thought to be mediated by two kinetically distinct systems, a glucose-repressible high-affinity system and a constitutive low-affinity system.</text>
</comment>
<comment type="miscellaneous">
    <text evidence="3">Present with 37200 molecules/cell in log phase SD medium.</text>
</comment>
<comment type="similarity">
    <text evidence="4">Belongs to the major facilitator superfamily. Sugar transporter (TC 2.A.1.1) family.</text>
</comment>
<sequence length="567" mass="62558">MNSTPDLISPQKSSENSNADLPSNSSQVMNMPEEKGVQDDFQAEADQVLTNPNTGKGAYVTVSICCVMVAFGGFVFGWDTGTISGFVAQTDFLRRFGMKHKDGSYYLSKVRTGLIVSIFNIGCAIGGIILAKLGDMYGRKMGLIVVVVIYIIGIIIQIASINKWYQYFIGRIISGLGVGGIAVLSPMLISEVAPKEMRGTLVSCYQLMITLGIFLGYCTNFGTKNYSNSVQWRVPLGLCFAWALFMIGGMTFVPESPRYLVEAGQIDEARASLSKVNKVAPDHPFIQQELEVIEASVEEARAAGSASWGELFTGKPAMFKRTMMGIMIQSLQQLTGDNYFFYYGTTVFNAVGMSDSFETSIVFGVVNFFSTCCSLYTVDRFGRRNCLLYGAIGMVCCYVVYASVGVTRLWPNGEGNGSSKGAGNCMIVFACFYIFCFATTWAPIAYVVISETFPLRVKSKAMSIATAANWLWGFLIGFFTPFITGAINFYYGYVFMGCMVFAYFYVFFFVPETKGLTLEEVNDMYAEGVLPWKSASWVPTSQRGANYDADALMHDDQPFYKKMFGKK</sequence>
<feature type="chain" id="PRO_0000050393" description="Low-affinity glucose transporter HXT3">
    <location>
        <begin position="1"/>
        <end position="567"/>
    </location>
</feature>
<feature type="topological domain" description="Cytoplasmic" evidence="1">
    <location>
        <begin position="1"/>
        <end position="57"/>
    </location>
</feature>
<feature type="transmembrane region" description="Helical; Name=1" evidence="1">
    <location>
        <begin position="58"/>
        <end position="78"/>
    </location>
</feature>
<feature type="topological domain" description="Extracellular" evidence="1">
    <location>
        <begin position="79"/>
        <end position="113"/>
    </location>
</feature>
<feature type="transmembrane region" description="Helical; Name=2" evidence="1">
    <location>
        <begin position="114"/>
        <end position="134"/>
    </location>
</feature>
<feature type="topological domain" description="Cytoplasmic" evidence="1">
    <location>
        <begin position="135"/>
        <end position="140"/>
    </location>
</feature>
<feature type="transmembrane region" description="Helical; Name=3" evidence="1">
    <location>
        <begin position="141"/>
        <end position="161"/>
    </location>
</feature>
<feature type="topological domain" description="Extracellular" evidence="1">
    <location>
        <begin position="162"/>
        <end position="171"/>
    </location>
</feature>
<feature type="transmembrane region" description="Helical; Name=4" evidence="1">
    <location>
        <begin position="172"/>
        <end position="192"/>
    </location>
</feature>
<feature type="topological domain" description="Cytoplasmic" evidence="1">
    <location>
        <begin position="193"/>
        <end position="198"/>
    </location>
</feature>
<feature type="transmembrane region" description="Helical; Name=5" evidence="1">
    <location>
        <begin position="199"/>
        <end position="219"/>
    </location>
</feature>
<feature type="topological domain" description="Extracellular" evidence="1">
    <location>
        <begin position="220"/>
        <end position="233"/>
    </location>
</feature>
<feature type="transmembrane region" description="Helical; Name=6" evidence="1">
    <location>
        <begin position="234"/>
        <end position="254"/>
    </location>
</feature>
<feature type="topological domain" description="Cytoplasmic" evidence="1">
    <location>
        <begin position="255"/>
        <end position="337"/>
    </location>
</feature>
<feature type="transmembrane region" description="Helical; Name=7" evidence="1">
    <location>
        <begin position="338"/>
        <end position="354"/>
    </location>
</feature>
<feature type="topological domain" description="Extracellular" evidence="1">
    <location>
        <begin position="355"/>
        <end position="360"/>
    </location>
</feature>
<feature type="transmembrane region" description="Helical; Name=8" evidence="1">
    <location>
        <begin position="361"/>
        <end position="378"/>
    </location>
</feature>
<feature type="topological domain" description="Cytoplasmic" evidence="1">
    <location>
        <begin position="379"/>
        <end position="385"/>
    </location>
</feature>
<feature type="transmembrane region" description="Helical; Name=9" evidence="1">
    <location>
        <begin position="386"/>
        <end position="406"/>
    </location>
</feature>
<feature type="topological domain" description="Extracellular" evidence="1">
    <location>
        <begin position="407"/>
        <end position="428"/>
    </location>
</feature>
<feature type="transmembrane region" description="Helical; Name=10" evidence="1">
    <location>
        <begin position="429"/>
        <end position="449"/>
    </location>
</feature>
<feature type="topological domain" description="Cytoplasmic" evidence="1">
    <location>
        <begin position="450"/>
        <end position="466"/>
    </location>
</feature>
<feature type="transmembrane region" description="Helical; Name=11" evidence="1">
    <location>
        <begin position="467"/>
        <end position="487"/>
    </location>
</feature>
<feature type="topological domain" description="Extracellular" evidence="1">
    <location>
        <position position="488"/>
    </location>
</feature>
<feature type="transmembrane region" description="Helical; Name=12" evidence="1">
    <location>
        <begin position="489"/>
        <end position="509"/>
    </location>
</feature>
<feature type="topological domain" description="Cytoplasmic" evidence="1">
    <location>
        <begin position="510"/>
        <end position="567"/>
    </location>
</feature>
<feature type="region of interest" description="Disordered" evidence="2">
    <location>
        <begin position="1"/>
        <end position="30"/>
    </location>
</feature>
<feature type="compositionally biased region" description="Polar residues" evidence="2">
    <location>
        <begin position="1"/>
        <end position="29"/>
    </location>
</feature>
<feature type="modified residue" description="Phosphoserine" evidence="5">
    <location>
        <position position="23"/>
    </location>
</feature>
<feature type="glycosylation site" description="N-linked (GlcNAc...) asparagine" evidence="1">
    <location>
        <position position="225"/>
    </location>
</feature>
<feature type="glycosylation site" description="N-linked (GlcNAc...) asparagine" evidence="1">
    <location>
        <position position="416"/>
    </location>
</feature>
<evidence type="ECO:0000255" key="1"/>
<evidence type="ECO:0000256" key="2">
    <source>
        <dbReference type="SAM" id="MobiDB-lite"/>
    </source>
</evidence>
<evidence type="ECO:0000269" key="3">
    <source>
    </source>
</evidence>
<evidence type="ECO:0000305" key="4"/>
<evidence type="ECO:0007744" key="5">
    <source>
    </source>
</evidence>
<gene>
    <name type="primary">HXT3</name>
    <name type="ordered locus">YDR345C</name>
    <name type="ORF">D9651.14</name>
</gene>
<organism>
    <name type="scientific">Saccharomyces cerevisiae (strain ATCC 204508 / S288c)</name>
    <name type="common">Baker's yeast</name>
    <dbReference type="NCBI Taxonomy" id="559292"/>
    <lineage>
        <taxon>Eukaryota</taxon>
        <taxon>Fungi</taxon>
        <taxon>Dikarya</taxon>
        <taxon>Ascomycota</taxon>
        <taxon>Saccharomycotina</taxon>
        <taxon>Saccharomycetes</taxon>
        <taxon>Saccharomycetales</taxon>
        <taxon>Saccharomycetaceae</taxon>
        <taxon>Saccharomyces</taxon>
    </lineage>
</organism>
<accession>P32466</accession>
<accession>D6VSX5</accession>
<reference key="1">
    <citation type="journal article" date="1993" name="Mol. Cell. Biol.">
        <title>Roles of multiple glucose transporters in Saccharomyces cerevisiae.</title>
        <authorList>
            <person name="Ko C.H."/>
            <person name="Liang H."/>
            <person name="Gaber R.F."/>
        </authorList>
    </citation>
    <scope>NUCLEOTIDE SEQUENCE [GENOMIC DNA]</scope>
</reference>
<reference key="2">
    <citation type="journal article" date="1997" name="Nature">
        <title>The nucleotide sequence of Saccharomyces cerevisiae chromosome IV.</title>
        <authorList>
            <person name="Jacq C."/>
            <person name="Alt-Moerbe J."/>
            <person name="Andre B."/>
            <person name="Arnold W."/>
            <person name="Bahr A."/>
            <person name="Ballesta J.P.G."/>
            <person name="Bargues M."/>
            <person name="Baron L."/>
            <person name="Becker A."/>
            <person name="Biteau N."/>
            <person name="Bloecker H."/>
            <person name="Blugeon C."/>
            <person name="Boskovic J."/>
            <person name="Brandt P."/>
            <person name="Brueckner M."/>
            <person name="Buitrago M.J."/>
            <person name="Coster F."/>
            <person name="Delaveau T."/>
            <person name="del Rey F."/>
            <person name="Dujon B."/>
            <person name="Eide L.G."/>
            <person name="Garcia-Cantalejo J.M."/>
            <person name="Goffeau A."/>
            <person name="Gomez-Peris A."/>
            <person name="Granotier C."/>
            <person name="Hanemann V."/>
            <person name="Hankeln T."/>
            <person name="Hoheisel J.D."/>
            <person name="Jaeger W."/>
            <person name="Jimenez A."/>
            <person name="Jonniaux J.-L."/>
            <person name="Kraemer C."/>
            <person name="Kuester H."/>
            <person name="Laamanen P."/>
            <person name="Legros Y."/>
            <person name="Louis E.J."/>
            <person name="Moeller-Rieker S."/>
            <person name="Monnet A."/>
            <person name="Moro M."/>
            <person name="Mueller-Auer S."/>
            <person name="Nussbaumer B."/>
            <person name="Paricio N."/>
            <person name="Paulin L."/>
            <person name="Perea J."/>
            <person name="Perez-Alonso M."/>
            <person name="Perez-Ortin J.E."/>
            <person name="Pohl T.M."/>
            <person name="Prydz H."/>
            <person name="Purnelle B."/>
            <person name="Rasmussen S.W."/>
            <person name="Remacha M.A."/>
            <person name="Revuelta J.L."/>
            <person name="Rieger M."/>
            <person name="Salom D."/>
            <person name="Saluz H.P."/>
            <person name="Saiz J.E."/>
            <person name="Saren A.-M."/>
            <person name="Schaefer M."/>
            <person name="Scharfe M."/>
            <person name="Schmidt E.R."/>
            <person name="Schneider C."/>
            <person name="Scholler P."/>
            <person name="Schwarz S."/>
            <person name="Soler-Mira A."/>
            <person name="Urrestarazu L.A."/>
            <person name="Verhasselt P."/>
            <person name="Vissers S."/>
            <person name="Voet M."/>
            <person name="Volckaert G."/>
            <person name="Wagner G."/>
            <person name="Wambutt R."/>
            <person name="Wedler E."/>
            <person name="Wedler H."/>
            <person name="Woelfl S."/>
            <person name="Harris D.E."/>
            <person name="Bowman S."/>
            <person name="Brown D."/>
            <person name="Churcher C.M."/>
            <person name="Connor R."/>
            <person name="Dedman K."/>
            <person name="Gentles S."/>
            <person name="Hamlin N."/>
            <person name="Hunt S."/>
            <person name="Jones L."/>
            <person name="McDonald S."/>
            <person name="Murphy L.D."/>
            <person name="Niblett D."/>
            <person name="Odell C."/>
            <person name="Oliver K."/>
            <person name="Rajandream M.A."/>
            <person name="Richards C."/>
            <person name="Shore L."/>
            <person name="Walsh S.V."/>
            <person name="Barrell B.G."/>
            <person name="Dietrich F.S."/>
            <person name="Mulligan J.T."/>
            <person name="Allen E."/>
            <person name="Araujo R."/>
            <person name="Aviles E."/>
            <person name="Berno A."/>
            <person name="Carpenter J."/>
            <person name="Chen E."/>
            <person name="Cherry J.M."/>
            <person name="Chung E."/>
            <person name="Duncan M."/>
            <person name="Hunicke-Smith S."/>
            <person name="Hyman R.W."/>
            <person name="Komp C."/>
            <person name="Lashkari D."/>
            <person name="Lew H."/>
            <person name="Lin D."/>
            <person name="Mosedale D."/>
            <person name="Nakahara K."/>
            <person name="Namath A."/>
            <person name="Oefner P."/>
            <person name="Oh C."/>
            <person name="Petel F.X."/>
            <person name="Roberts D."/>
            <person name="Schramm S."/>
            <person name="Schroeder M."/>
            <person name="Shogren T."/>
            <person name="Shroff N."/>
            <person name="Winant A."/>
            <person name="Yelton M.A."/>
            <person name="Botstein D."/>
            <person name="Davis R.W."/>
            <person name="Johnston M."/>
            <person name="Andrews S."/>
            <person name="Brinkman R."/>
            <person name="Cooper J."/>
            <person name="Ding H."/>
            <person name="Du Z."/>
            <person name="Favello A."/>
            <person name="Fulton L."/>
            <person name="Gattung S."/>
            <person name="Greco T."/>
            <person name="Hallsworth K."/>
            <person name="Hawkins J."/>
            <person name="Hillier L.W."/>
            <person name="Jier M."/>
            <person name="Johnson D."/>
            <person name="Johnston L."/>
            <person name="Kirsten J."/>
            <person name="Kucaba T."/>
            <person name="Langston Y."/>
            <person name="Latreille P."/>
            <person name="Le T."/>
            <person name="Mardis E."/>
            <person name="Menezes S."/>
            <person name="Miller N."/>
            <person name="Nhan M."/>
            <person name="Pauley A."/>
            <person name="Peluso D."/>
            <person name="Rifkin L."/>
            <person name="Riles L."/>
            <person name="Taich A."/>
            <person name="Trevaskis E."/>
            <person name="Vignati D."/>
            <person name="Wilcox L."/>
            <person name="Wohldman P."/>
            <person name="Vaudin M."/>
            <person name="Wilson R."/>
            <person name="Waterston R."/>
            <person name="Albermann K."/>
            <person name="Hani J."/>
            <person name="Heumann K."/>
            <person name="Kleine K."/>
            <person name="Mewes H.-W."/>
            <person name="Zollner A."/>
            <person name="Zaccaria P."/>
        </authorList>
    </citation>
    <scope>NUCLEOTIDE SEQUENCE [LARGE SCALE GENOMIC DNA]</scope>
    <source>
        <strain>ATCC 204508 / S288c</strain>
    </source>
</reference>
<reference key="3">
    <citation type="journal article" date="2014" name="G3 (Bethesda)">
        <title>The reference genome sequence of Saccharomyces cerevisiae: Then and now.</title>
        <authorList>
            <person name="Engel S.R."/>
            <person name="Dietrich F.S."/>
            <person name="Fisk D.G."/>
            <person name="Binkley G."/>
            <person name="Balakrishnan R."/>
            <person name="Costanzo M.C."/>
            <person name="Dwight S.S."/>
            <person name="Hitz B.C."/>
            <person name="Karra K."/>
            <person name="Nash R.S."/>
            <person name="Weng S."/>
            <person name="Wong E.D."/>
            <person name="Lloyd P."/>
            <person name="Skrzypek M.S."/>
            <person name="Miyasato S.R."/>
            <person name="Simison M."/>
            <person name="Cherry J.M."/>
        </authorList>
    </citation>
    <scope>GENOME REANNOTATION</scope>
    <source>
        <strain>ATCC 204508 / S288c</strain>
    </source>
</reference>
<reference key="4">
    <citation type="journal article" date="2003" name="Nature">
        <title>Global analysis of protein expression in yeast.</title>
        <authorList>
            <person name="Ghaemmaghami S."/>
            <person name="Huh W.-K."/>
            <person name="Bower K."/>
            <person name="Howson R.W."/>
            <person name="Belle A."/>
            <person name="Dephoure N."/>
            <person name="O'Shea E.K."/>
            <person name="Weissman J.S."/>
        </authorList>
    </citation>
    <scope>LEVEL OF PROTEIN EXPRESSION [LARGE SCALE ANALYSIS]</scope>
</reference>
<reference key="5">
    <citation type="journal article" date="2006" name="Proc. Natl. Acad. Sci. U.S.A.">
        <title>A global topology map of the Saccharomyces cerevisiae membrane proteome.</title>
        <authorList>
            <person name="Kim H."/>
            <person name="Melen K."/>
            <person name="Oesterberg M."/>
            <person name="von Heijne G."/>
        </authorList>
    </citation>
    <scope>TOPOLOGY [LARGE SCALE ANALYSIS]</scope>
    <source>
        <strain>ATCC 208353 / W303-1A</strain>
    </source>
</reference>
<reference key="6">
    <citation type="journal article" date="2007" name="J. Proteome Res.">
        <title>Large-scale phosphorylation analysis of alpha-factor-arrested Saccharomyces cerevisiae.</title>
        <authorList>
            <person name="Li X."/>
            <person name="Gerber S.A."/>
            <person name="Rudner A.D."/>
            <person name="Beausoleil S.A."/>
            <person name="Haas W."/>
            <person name="Villen J."/>
            <person name="Elias J.E."/>
            <person name="Gygi S.P."/>
        </authorList>
    </citation>
    <scope>PHOSPHORYLATION [LARGE SCALE ANALYSIS] AT SER-23</scope>
    <scope>IDENTIFICATION BY MASS SPECTROMETRY [LARGE SCALE ANALYSIS]</scope>
    <source>
        <strain>ADR376</strain>
    </source>
</reference>
<protein>
    <recommendedName>
        <fullName>Low-affinity glucose transporter HXT3</fullName>
    </recommendedName>
</protein>